<feature type="chain" id="PRO_0000225441" description="Dihydroxy-acid dehydratase">
    <location>
        <begin position="1"/>
        <end position="593"/>
    </location>
</feature>
<feature type="region of interest" description="Disordered" evidence="2">
    <location>
        <begin position="1"/>
        <end position="40"/>
    </location>
</feature>
<feature type="compositionally biased region" description="Acidic residues" evidence="2">
    <location>
        <begin position="1"/>
        <end position="17"/>
    </location>
</feature>
<feature type="compositionally biased region" description="Basic and acidic residues" evidence="2">
    <location>
        <begin position="22"/>
        <end position="40"/>
    </location>
</feature>
<feature type="active site" description="Proton acceptor" evidence="1">
    <location>
        <position position="501"/>
    </location>
</feature>
<feature type="binding site" evidence="1">
    <location>
        <position position="72"/>
    </location>
    <ligand>
        <name>[2Fe-2S] cluster</name>
        <dbReference type="ChEBI" id="CHEBI:190135"/>
    </ligand>
</feature>
<feature type="binding site" evidence="1">
    <location>
        <position position="104"/>
    </location>
    <ligand>
        <name>Mg(2+)</name>
        <dbReference type="ChEBI" id="CHEBI:18420"/>
    </ligand>
</feature>
<feature type="binding site" evidence="1">
    <location>
        <position position="145"/>
    </location>
    <ligand>
        <name>[2Fe-2S] cluster</name>
        <dbReference type="ChEBI" id="CHEBI:190135"/>
    </ligand>
</feature>
<feature type="binding site" evidence="1">
    <location>
        <position position="146"/>
    </location>
    <ligand>
        <name>Mg(2+)</name>
        <dbReference type="ChEBI" id="CHEBI:18420"/>
    </ligand>
</feature>
<feature type="binding site" description="via carbamate group" evidence="1">
    <location>
        <position position="147"/>
    </location>
    <ligand>
        <name>Mg(2+)</name>
        <dbReference type="ChEBI" id="CHEBI:18420"/>
    </ligand>
</feature>
<feature type="binding site" evidence="1">
    <location>
        <position position="217"/>
    </location>
    <ligand>
        <name>[2Fe-2S] cluster</name>
        <dbReference type="ChEBI" id="CHEBI:190135"/>
    </ligand>
</feature>
<feature type="binding site" evidence="1">
    <location>
        <position position="475"/>
    </location>
    <ligand>
        <name>Mg(2+)</name>
        <dbReference type="ChEBI" id="CHEBI:18420"/>
    </ligand>
</feature>
<feature type="modified residue" description="N6-carboxylysine" evidence="1">
    <location>
        <position position="147"/>
    </location>
</feature>
<keyword id="KW-0001">2Fe-2S</keyword>
<keyword id="KW-0028">Amino-acid biosynthesis</keyword>
<keyword id="KW-0100">Branched-chain amino acid biosynthesis</keyword>
<keyword id="KW-0408">Iron</keyword>
<keyword id="KW-0411">Iron-sulfur</keyword>
<keyword id="KW-0456">Lyase</keyword>
<keyword id="KW-0460">Magnesium</keyword>
<keyword id="KW-0479">Metal-binding</keyword>
<keyword id="KW-1185">Reference proteome</keyword>
<sequence>MSQQTEPDDDAALDGDEPGAYGKDERLRSREVTEGPERAPHRAMFRAMGYDDEDLSSPLIGVPNPAADITPCNVHLDDVAESALEGIDEAGGMPIEFGTITISDAISMGTEGMKASLISREVIADSVELVSFGERMDALVTVAGCDKNLPGMMMAAIRTDLPSVFLYGGSIMPGQHEGRDVTIVQVFEGVGAYAQGEMSGDELDDLERNACPGAGSCGGMFTANTMASLSEALGLAPLGSASPPAENHERYAVARRAGELAVEVVEEDRHPSDILTRTSFENAIALQTAMGGSTNAVLHLLALAAEAGIDLDIEDFDAISRRTPKIADLQPGGDRVMNDLHEIGGVPVVIRRLMEADLFDGSQLTVTGRTIEEELAHLESEHGLPTDDEIDADFLYPVDDPKEAEGAIKILTGNLAPDGAVLKVTGDDEFYHEGPARVFENEEDAMKYVQEGHIESGDVIVIRNEGPEGGPGMREMLGVTAAVVGAGHEDDVALLTDGRFSGGTRGPMIGHIAPEAFVGGPIGALEDGDHITVDIPDRTIEVDLSDSELERRLDERDDPEPAYTNGVVAKYGSLFGSAANGAVTNPGLHNDQH</sequence>
<dbReference type="EC" id="4.2.1.9" evidence="1"/>
<dbReference type="EMBL" id="CR936257">
    <property type="protein sequence ID" value="CAI50554.2"/>
    <property type="molecule type" value="Genomic_DNA"/>
</dbReference>
<dbReference type="RefSeq" id="WP_011324166.1">
    <property type="nucleotide sequence ID" value="NC_007426.1"/>
</dbReference>
<dbReference type="SMR" id="Q3IMV2"/>
<dbReference type="STRING" id="348780.NP_4926A"/>
<dbReference type="EnsemblBacteria" id="CAI50554">
    <property type="protein sequence ID" value="CAI50554"/>
    <property type="gene ID" value="NP_4926A"/>
</dbReference>
<dbReference type="GeneID" id="3702868"/>
<dbReference type="KEGG" id="nph:NP_4926A"/>
<dbReference type="eggNOG" id="arCOG04045">
    <property type="taxonomic scope" value="Archaea"/>
</dbReference>
<dbReference type="HOGENOM" id="CLU_014271_4_2_2"/>
<dbReference type="OrthoDB" id="8674at2157"/>
<dbReference type="UniPathway" id="UPA00047">
    <property type="reaction ID" value="UER00057"/>
</dbReference>
<dbReference type="UniPathway" id="UPA00049">
    <property type="reaction ID" value="UER00061"/>
</dbReference>
<dbReference type="Proteomes" id="UP000002698">
    <property type="component" value="Chromosome"/>
</dbReference>
<dbReference type="GO" id="GO:0051537">
    <property type="term" value="F:2 iron, 2 sulfur cluster binding"/>
    <property type="evidence" value="ECO:0007669"/>
    <property type="project" value="UniProtKB-UniRule"/>
</dbReference>
<dbReference type="GO" id="GO:0004160">
    <property type="term" value="F:dihydroxy-acid dehydratase activity"/>
    <property type="evidence" value="ECO:0007669"/>
    <property type="project" value="UniProtKB-UniRule"/>
</dbReference>
<dbReference type="GO" id="GO:0000287">
    <property type="term" value="F:magnesium ion binding"/>
    <property type="evidence" value="ECO:0007669"/>
    <property type="project" value="UniProtKB-UniRule"/>
</dbReference>
<dbReference type="GO" id="GO:0009097">
    <property type="term" value="P:isoleucine biosynthetic process"/>
    <property type="evidence" value="ECO:0007669"/>
    <property type="project" value="UniProtKB-UniRule"/>
</dbReference>
<dbReference type="GO" id="GO:0009099">
    <property type="term" value="P:L-valine biosynthetic process"/>
    <property type="evidence" value="ECO:0007669"/>
    <property type="project" value="UniProtKB-UniRule"/>
</dbReference>
<dbReference type="FunFam" id="3.50.30.80:FF:000001">
    <property type="entry name" value="Dihydroxy-acid dehydratase"/>
    <property type="match status" value="1"/>
</dbReference>
<dbReference type="Gene3D" id="3.50.30.80">
    <property type="entry name" value="IlvD/EDD C-terminal domain-like"/>
    <property type="match status" value="1"/>
</dbReference>
<dbReference type="HAMAP" id="MF_00012">
    <property type="entry name" value="IlvD"/>
    <property type="match status" value="1"/>
</dbReference>
<dbReference type="InterPro" id="IPR050165">
    <property type="entry name" value="DHAD_IlvD/Edd"/>
</dbReference>
<dbReference type="InterPro" id="IPR042096">
    <property type="entry name" value="Dihydro-acid_dehy_C"/>
</dbReference>
<dbReference type="InterPro" id="IPR004404">
    <property type="entry name" value="DihydroxyA_deHydtase"/>
</dbReference>
<dbReference type="InterPro" id="IPR020558">
    <property type="entry name" value="DiOHA_6PGluconate_deHydtase_CS"/>
</dbReference>
<dbReference type="InterPro" id="IPR056740">
    <property type="entry name" value="ILV_EDD_C"/>
</dbReference>
<dbReference type="InterPro" id="IPR000581">
    <property type="entry name" value="ILV_EDD_N"/>
</dbReference>
<dbReference type="InterPro" id="IPR037237">
    <property type="entry name" value="IlvD/EDD_N"/>
</dbReference>
<dbReference type="NCBIfam" id="TIGR00110">
    <property type="entry name" value="ilvD"/>
    <property type="match status" value="1"/>
</dbReference>
<dbReference type="NCBIfam" id="NF002068">
    <property type="entry name" value="PRK00911.1"/>
    <property type="match status" value="1"/>
</dbReference>
<dbReference type="PANTHER" id="PTHR21000">
    <property type="entry name" value="DIHYDROXY-ACID DEHYDRATASE DAD"/>
    <property type="match status" value="1"/>
</dbReference>
<dbReference type="PANTHER" id="PTHR21000:SF5">
    <property type="entry name" value="DIHYDROXY-ACID DEHYDRATASE, MITOCHONDRIAL"/>
    <property type="match status" value="1"/>
</dbReference>
<dbReference type="Pfam" id="PF24877">
    <property type="entry name" value="ILV_EDD_C"/>
    <property type="match status" value="1"/>
</dbReference>
<dbReference type="Pfam" id="PF00920">
    <property type="entry name" value="ILVD_EDD_N"/>
    <property type="match status" value="1"/>
</dbReference>
<dbReference type="SUPFAM" id="SSF143975">
    <property type="entry name" value="IlvD/EDD N-terminal domain-like"/>
    <property type="match status" value="1"/>
</dbReference>
<dbReference type="SUPFAM" id="SSF52016">
    <property type="entry name" value="LeuD/IlvD-like"/>
    <property type="match status" value="1"/>
</dbReference>
<dbReference type="PROSITE" id="PS00886">
    <property type="entry name" value="ILVD_EDD_1"/>
    <property type="match status" value="1"/>
</dbReference>
<dbReference type="PROSITE" id="PS00887">
    <property type="entry name" value="ILVD_EDD_2"/>
    <property type="match status" value="1"/>
</dbReference>
<organism>
    <name type="scientific">Natronomonas pharaonis (strain ATCC 35678 / DSM 2160 / CIP 103997 / JCM 8858 / NBRC 14720 / NCIMB 2260 / Gabara)</name>
    <name type="common">Halobacterium pharaonis</name>
    <dbReference type="NCBI Taxonomy" id="348780"/>
    <lineage>
        <taxon>Archaea</taxon>
        <taxon>Methanobacteriati</taxon>
        <taxon>Methanobacteriota</taxon>
        <taxon>Stenosarchaea group</taxon>
        <taxon>Halobacteria</taxon>
        <taxon>Halobacteriales</taxon>
        <taxon>Haloarculaceae</taxon>
        <taxon>Natronomonas</taxon>
    </lineage>
</organism>
<reference key="1">
    <citation type="journal article" date="2005" name="Genome Res.">
        <title>Living with two extremes: conclusions from the genome sequence of Natronomonas pharaonis.</title>
        <authorList>
            <person name="Falb M."/>
            <person name="Pfeiffer F."/>
            <person name="Palm P."/>
            <person name="Rodewald K."/>
            <person name="Hickmann V."/>
            <person name="Tittor J."/>
            <person name="Oesterhelt D."/>
        </authorList>
    </citation>
    <scope>NUCLEOTIDE SEQUENCE [LARGE SCALE GENOMIC DNA]</scope>
    <source>
        <strain>ATCC 35678 / DSM 2160 / CIP 103997 / JCM 8858 / NBRC 14720 / NCIMB 2260 / Gabara</strain>
    </source>
</reference>
<evidence type="ECO:0000255" key="1">
    <source>
        <dbReference type="HAMAP-Rule" id="MF_00012"/>
    </source>
</evidence>
<evidence type="ECO:0000256" key="2">
    <source>
        <dbReference type="SAM" id="MobiDB-lite"/>
    </source>
</evidence>
<accession>Q3IMV2</accession>
<gene>
    <name evidence="1" type="primary">ilvD</name>
    <name type="ordered locus">NP_4926A</name>
</gene>
<proteinExistence type="inferred from homology"/>
<name>ILVD_NATPD</name>
<comment type="function">
    <text evidence="1">Functions in the biosynthesis of branched-chain amino acids. Catalyzes the dehydration of (2R,3R)-2,3-dihydroxy-3-methylpentanoate (2,3-dihydroxy-3-methylvalerate) into 2-oxo-3-methylpentanoate (2-oxo-3-methylvalerate) and of (2R)-2,3-dihydroxy-3-methylbutanoate (2,3-dihydroxyisovalerate) into 2-oxo-3-methylbutanoate (2-oxoisovalerate), the penultimate precursor to L-isoleucine and L-valine, respectively.</text>
</comment>
<comment type="catalytic activity">
    <reaction evidence="1">
        <text>(2R)-2,3-dihydroxy-3-methylbutanoate = 3-methyl-2-oxobutanoate + H2O</text>
        <dbReference type="Rhea" id="RHEA:24809"/>
        <dbReference type="ChEBI" id="CHEBI:11851"/>
        <dbReference type="ChEBI" id="CHEBI:15377"/>
        <dbReference type="ChEBI" id="CHEBI:49072"/>
        <dbReference type="EC" id="4.2.1.9"/>
    </reaction>
    <physiologicalReaction direction="left-to-right" evidence="1">
        <dbReference type="Rhea" id="RHEA:24810"/>
    </physiologicalReaction>
</comment>
<comment type="catalytic activity">
    <reaction evidence="1">
        <text>(2R,3R)-2,3-dihydroxy-3-methylpentanoate = (S)-3-methyl-2-oxopentanoate + H2O</text>
        <dbReference type="Rhea" id="RHEA:27694"/>
        <dbReference type="ChEBI" id="CHEBI:15377"/>
        <dbReference type="ChEBI" id="CHEBI:35146"/>
        <dbReference type="ChEBI" id="CHEBI:49258"/>
        <dbReference type="EC" id="4.2.1.9"/>
    </reaction>
    <physiologicalReaction direction="left-to-right" evidence="1">
        <dbReference type="Rhea" id="RHEA:27695"/>
    </physiologicalReaction>
</comment>
<comment type="cofactor">
    <cofactor evidence="1">
        <name>[2Fe-2S] cluster</name>
        <dbReference type="ChEBI" id="CHEBI:190135"/>
    </cofactor>
    <text evidence="1">Binds 1 [2Fe-2S] cluster per subunit. This cluster acts as a Lewis acid cofactor.</text>
</comment>
<comment type="cofactor">
    <cofactor evidence="1">
        <name>Mg(2+)</name>
        <dbReference type="ChEBI" id="CHEBI:18420"/>
    </cofactor>
</comment>
<comment type="pathway">
    <text evidence="1">Amino-acid biosynthesis; L-isoleucine biosynthesis; L-isoleucine from 2-oxobutanoate: step 3/4.</text>
</comment>
<comment type="pathway">
    <text evidence="1">Amino-acid biosynthesis; L-valine biosynthesis; L-valine from pyruvate: step 3/4.</text>
</comment>
<comment type="subunit">
    <text evidence="1">Homodimer.</text>
</comment>
<comment type="similarity">
    <text evidence="1">Belongs to the IlvD/Edd family.</text>
</comment>
<protein>
    <recommendedName>
        <fullName evidence="1">Dihydroxy-acid dehydratase</fullName>
        <shortName evidence="1">DAD</shortName>
        <ecNumber evidence="1">4.2.1.9</ecNumber>
    </recommendedName>
</protein>